<gene>
    <name evidence="1" type="primary">petJ</name>
    <name type="ordered locus">PCC7424_4355</name>
</gene>
<name>CYC6_GLOC7</name>
<sequence>MKKLVSSVILALILFGFSWVSPAFAGDAGNGSKVFSANCNACHLGGKNVVNAAKTLNKSDLEKYAMLDLEAIKTQVTNGKGAMPAFGKRLTPDQIEDVATYVLEKAEKGW</sequence>
<reference key="1">
    <citation type="journal article" date="2011" name="MBio">
        <title>Novel metabolic attributes of the genus Cyanothece, comprising a group of unicellular nitrogen-fixing Cyanobacteria.</title>
        <authorList>
            <person name="Bandyopadhyay A."/>
            <person name="Elvitigala T."/>
            <person name="Welsh E."/>
            <person name="Stockel J."/>
            <person name="Liberton M."/>
            <person name="Min H."/>
            <person name="Sherman L.A."/>
            <person name="Pakrasi H.B."/>
        </authorList>
    </citation>
    <scope>NUCLEOTIDE SEQUENCE [LARGE SCALE GENOMIC DNA]</scope>
    <source>
        <strain>PCC 7424</strain>
    </source>
</reference>
<evidence type="ECO:0000255" key="1">
    <source>
        <dbReference type="HAMAP-Rule" id="MF_00594"/>
    </source>
</evidence>
<comment type="function">
    <text evidence="1">Functions as an electron carrier between membrane-bound cytochrome b6-f and photosystem I in oxygenic photosynthesis.</text>
</comment>
<comment type="subunit">
    <text evidence="1">Monomer.</text>
</comment>
<comment type="subcellular location">
    <subcellularLocation>
        <location evidence="1">Cellular thylakoid lumen</location>
    </subcellularLocation>
</comment>
<comment type="PTM">
    <text evidence="1">Binds 1 heme c group covalently per subunit.</text>
</comment>
<comment type="similarity">
    <text evidence="1">Belongs to the cytochrome c family. PetJ subfamily.</text>
</comment>
<dbReference type="EMBL" id="CP001291">
    <property type="protein sequence ID" value="ACK72721.1"/>
    <property type="molecule type" value="Genomic_DNA"/>
</dbReference>
<dbReference type="RefSeq" id="WP_015956306.1">
    <property type="nucleotide sequence ID" value="NC_011729.1"/>
</dbReference>
<dbReference type="SMR" id="B7K722"/>
<dbReference type="STRING" id="65393.PCC7424_4355"/>
<dbReference type="KEGG" id="cyc:PCC7424_4355"/>
<dbReference type="eggNOG" id="COG2010">
    <property type="taxonomic scope" value="Bacteria"/>
</dbReference>
<dbReference type="HOGENOM" id="CLU_101159_1_0_3"/>
<dbReference type="OrthoDB" id="5570429at2"/>
<dbReference type="Proteomes" id="UP000002384">
    <property type="component" value="Chromosome"/>
</dbReference>
<dbReference type="GO" id="GO:0031979">
    <property type="term" value="C:plasma membrane-derived thylakoid lumen"/>
    <property type="evidence" value="ECO:0007669"/>
    <property type="project" value="UniProtKB-SubCell"/>
</dbReference>
<dbReference type="GO" id="GO:0009055">
    <property type="term" value="F:electron transfer activity"/>
    <property type="evidence" value="ECO:0007669"/>
    <property type="project" value="UniProtKB-UniRule"/>
</dbReference>
<dbReference type="GO" id="GO:0020037">
    <property type="term" value="F:heme binding"/>
    <property type="evidence" value="ECO:0007669"/>
    <property type="project" value="InterPro"/>
</dbReference>
<dbReference type="GO" id="GO:0005506">
    <property type="term" value="F:iron ion binding"/>
    <property type="evidence" value="ECO:0007669"/>
    <property type="project" value="InterPro"/>
</dbReference>
<dbReference type="GO" id="GO:0015979">
    <property type="term" value="P:photosynthesis"/>
    <property type="evidence" value="ECO:0007669"/>
    <property type="project" value="UniProtKB-UniRule"/>
</dbReference>
<dbReference type="FunFam" id="1.10.760.10:FF:000038">
    <property type="entry name" value="Cytochrome c6"/>
    <property type="match status" value="1"/>
</dbReference>
<dbReference type="Gene3D" id="1.10.760.10">
    <property type="entry name" value="Cytochrome c-like domain"/>
    <property type="match status" value="1"/>
</dbReference>
<dbReference type="HAMAP" id="MF_00594">
    <property type="entry name" value="Cytc_PetJ"/>
    <property type="match status" value="1"/>
</dbReference>
<dbReference type="InterPro" id="IPR009056">
    <property type="entry name" value="Cyt_c-like_dom"/>
</dbReference>
<dbReference type="InterPro" id="IPR036909">
    <property type="entry name" value="Cyt_c-like_dom_sf"/>
</dbReference>
<dbReference type="InterPro" id="IPR023655">
    <property type="entry name" value="Cyt_C6"/>
</dbReference>
<dbReference type="InterPro" id="IPR008168">
    <property type="entry name" value="Cyt_C_IC"/>
</dbReference>
<dbReference type="NCBIfam" id="NF045930">
    <property type="entry name" value="Cytc6PetJCyano"/>
    <property type="match status" value="1"/>
</dbReference>
<dbReference type="PANTHER" id="PTHR34688">
    <property type="entry name" value="CYTOCHROME C6, CHLOROPLASTIC"/>
    <property type="match status" value="1"/>
</dbReference>
<dbReference type="PANTHER" id="PTHR34688:SF2">
    <property type="entry name" value="CYTOCHROME C6, CHLOROPLASTIC"/>
    <property type="match status" value="1"/>
</dbReference>
<dbReference type="Pfam" id="PF13442">
    <property type="entry name" value="Cytochrome_CBB3"/>
    <property type="match status" value="1"/>
</dbReference>
<dbReference type="PRINTS" id="PR00605">
    <property type="entry name" value="CYTCHROMECIC"/>
</dbReference>
<dbReference type="SUPFAM" id="SSF46626">
    <property type="entry name" value="Cytochrome c"/>
    <property type="match status" value="1"/>
</dbReference>
<dbReference type="PROSITE" id="PS51007">
    <property type="entry name" value="CYTC"/>
    <property type="match status" value="1"/>
</dbReference>
<feature type="signal peptide" evidence="1">
    <location>
        <begin position="1"/>
        <end position="25"/>
    </location>
</feature>
<feature type="chain" id="PRO_5000418014" description="Cytochrome c6">
    <location>
        <begin position="26"/>
        <end position="110"/>
    </location>
</feature>
<feature type="binding site" description="covalent" evidence="1">
    <location>
        <position position="39"/>
    </location>
    <ligand>
        <name>heme c</name>
        <dbReference type="ChEBI" id="CHEBI:61717"/>
    </ligand>
</feature>
<feature type="binding site" description="covalent" evidence="1">
    <location>
        <position position="42"/>
    </location>
    <ligand>
        <name>heme c</name>
        <dbReference type="ChEBI" id="CHEBI:61717"/>
    </ligand>
</feature>
<feature type="binding site" description="axial binding residue" evidence="1">
    <location>
        <position position="43"/>
    </location>
    <ligand>
        <name>heme c</name>
        <dbReference type="ChEBI" id="CHEBI:61717"/>
    </ligand>
    <ligandPart>
        <name>Fe</name>
        <dbReference type="ChEBI" id="CHEBI:18248"/>
    </ligandPart>
</feature>
<feature type="binding site" description="axial binding residue" evidence="1">
    <location>
        <position position="83"/>
    </location>
    <ligand>
        <name>heme c</name>
        <dbReference type="ChEBI" id="CHEBI:61717"/>
    </ligand>
    <ligandPart>
        <name>Fe</name>
        <dbReference type="ChEBI" id="CHEBI:18248"/>
    </ligandPart>
</feature>
<keyword id="KW-0249">Electron transport</keyword>
<keyword id="KW-0349">Heme</keyword>
<keyword id="KW-0408">Iron</keyword>
<keyword id="KW-0479">Metal-binding</keyword>
<keyword id="KW-0602">Photosynthesis</keyword>
<keyword id="KW-1185">Reference proteome</keyword>
<keyword id="KW-0732">Signal</keyword>
<keyword id="KW-0793">Thylakoid</keyword>
<keyword id="KW-0813">Transport</keyword>
<proteinExistence type="inferred from homology"/>
<organism>
    <name type="scientific">Gloeothece citriformis (strain PCC 7424)</name>
    <name type="common">Cyanothece sp. (strain PCC 7424)</name>
    <dbReference type="NCBI Taxonomy" id="65393"/>
    <lineage>
        <taxon>Bacteria</taxon>
        <taxon>Bacillati</taxon>
        <taxon>Cyanobacteriota</taxon>
        <taxon>Cyanophyceae</taxon>
        <taxon>Oscillatoriophycideae</taxon>
        <taxon>Chroococcales</taxon>
        <taxon>Aphanothecaceae</taxon>
        <taxon>Gloeothece</taxon>
        <taxon>Gloeothece citriformis</taxon>
    </lineage>
</organism>
<protein>
    <recommendedName>
        <fullName evidence="1">Cytochrome c6</fullName>
    </recommendedName>
    <alternativeName>
        <fullName evidence="1">Cytochrome c-553</fullName>
    </alternativeName>
    <alternativeName>
        <fullName evidence="1">Cytochrome c553</fullName>
    </alternativeName>
    <alternativeName>
        <fullName evidence="1">Soluble cytochrome f</fullName>
    </alternativeName>
</protein>
<accession>B7K722</accession>